<comment type="function">
    <text evidence="1 3">Required for normal spermatogenesis. It functions as a scaffold protein that attaches the sperm head-tail connecting piece to the nuclear envelope, thus maintaining sperm head and tail integrity. May also be involved in the general organization of cellular cytoskeleton.</text>
</comment>
<comment type="subcellular location">
    <subcellularLocation>
        <location evidence="1">Cell projection</location>
        <location evidence="1">Cilium</location>
        <location evidence="1">Flagellum</location>
    </subcellularLocation>
    <text evidence="1">Localized at the sperm head-tail connecting piece. During spermatogenesis, it is first observed in the cytoplasm of round spermatids, it later appears in the implantation fossa region of the sperm nucleus during sperm head elongation and differentiation, and finally it localizes to the head-tail connecting piece.</text>
</comment>
<comment type="tissue specificity">
    <text evidence="3">Expressed in testis and more specifically in ODF, the sperm tail specific cytoskeletal structure. Also expressed in epididymides and brain.</text>
</comment>
<sequence length="971" mass="113523">MLKLKGEFRTAKGLKDENKKQAQTLVFTDNQVEFKSNKQYHLRQLQQLKKKLLTLQQELEIRTQELQASYRSLLQYQSILEKQTSDLLVLHHHCKLKEDEVILYEEEMGSHSKNTGEKLHLAQEQLALAGDKIVSLERSLNLYRDKYQTSLSNIELLECQVKMLEEELSGLICQDPENKGDHSKVRIYTSPCMIQEHQETLKRLSEVWQKVSEQDDLIQELRNKLACSNSLVLEREEALIKLRADFASYTATHRHPPTSSEDCEDITKILKYLQEQKDSQCLHVEEYQNLVKDLRLELEAVSEQKKKIMKDMMKLELDLHGLREETSCVIEKKDKETVFLQYRLQDLQQQYTESQKLSLKKDKLLQDKDERLNELEKKLTQVQCLFLEKETELEKLQSTTKELDANLQEVRQSTSKIDNEGLRSEIQKLKESLEEAREQLRVSDQNLSQCKDEAHLSANNLEDAHRKLENCLLQDKRKDDVIKDLQSQLQKLQKESSETEEERKNNRQQLLELSSELNEGQRRLSSAEKEKSLLQKTLDEEEKKIDELLHGAKVSEQKQRELTNSLSKLQDELAETKRLLEEKREQLRKSKDQEKALEEEIEALRQESKKKEKMAKEQLRKLEEEKENLQAELSSCSSQLDSSINKYNNSQKVIQELNTEIARQKDSIMILQTQLDSAIQKEKNCFQNMVSKETYEELLRKSGTCQDDLTQALEKLTQATSETKSLQRNLQQTQERKAQLEDEIMAYEERMKKLNMELKKLQGFQQQSELEVHNFDKKLEEMGNQVLQWQRQHQSDLKMLAAKETQLREFQEEMTALKENLLADEKEPSLMPSKPAPKENYRHHRENDQIMCNVEQWAKEQKLANEKLGNKLREQVKYIAKLTGEKDHLHNVMAHLQQENKKLKNEIEEKKLKAGTPRICAKVLGPCKLEPSQKGKLCGALGWRGVCQDPLPKMDLTKYTGVPHCSGSSYC</sequence>
<keyword id="KW-0966">Cell projection</keyword>
<keyword id="KW-0969">Cilium</keyword>
<keyword id="KW-0175">Coiled coil</keyword>
<keyword id="KW-0282">Flagellum</keyword>
<keyword id="KW-1185">Reference proteome</keyword>
<organism>
    <name type="scientific">Rattus norvegicus</name>
    <name type="common">Rat</name>
    <dbReference type="NCBI Taxonomy" id="10116"/>
    <lineage>
        <taxon>Eukaryota</taxon>
        <taxon>Metazoa</taxon>
        <taxon>Chordata</taxon>
        <taxon>Craniata</taxon>
        <taxon>Vertebrata</taxon>
        <taxon>Euteleostomi</taxon>
        <taxon>Mammalia</taxon>
        <taxon>Eutheria</taxon>
        <taxon>Euarchontoglires</taxon>
        <taxon>Glires</taxon>
        <taxon>Rodentia</taxon>
        <taxon>Myomorpha</taxon>
        <taxon>Muroidea</taxon>
        <taxon>Muridae</taxon>
        <taxon>Murinae</taxon>
        <taxon>Rattus</taxon>
    </lineage>
</organism>
<feature type="chain" id="PRO_0000304621" description="Polyamine-modulated factor 1-binding protein 1">
    <location>
        <begin position="1"/>
        <end position="971"/>
    </location>
</feature>
<feature type="coiled-coil region" evidence="2">
    <location>
        <begin position="37"/>
        <end position="69"/>
    </location>
</feature>
<feature type="coiled-coil region" evidence="2">
    <location>
        <begin position="117"/>
        <end position="229"/>
    </location>
</feature>
<feature type="coiled-coil region" evidence="2">
    <location>
        <begin position="282"/>
        <end position="325"/>
    </location>
</feature>
<feature type="coiled-coil region" evidence="2">
    <location>
        <begin position="355"/>
        <end position="680"/>
    </location>
</feature>
<feature type="coiled-coil region" evidence="2">
    <location>
        <begin position="706"/>
        <end position="827"/>
    </location>
</feature>
<feature type="coiled-coil region" evidence="2">
    <location>
        <begin position="879"/>
        <end position="916"/>
    </location>
</feature>
<protein>
    <recommendedName>
        <fullName>Polyamine-modulated factor 1-binding protein 1</fullName>
        <shortName>PMF-1-binding protein</shortName>
    </recommendedName>
    <alternativeName>
        <fullName>Outer dense fiber protein 3</fullName>
    </alternativeName>
</protein>
<gene>
    <name type="primary">Pmfbp1</name>
    <name type="synonym">Odf3</name>
</gene>
<accession>Q9Z221</accession>
<proteinExistence type="evidence at transcript level"/>
<dbReference type="EMBL" id="AF092090">
    <property type="protein sequence ID" value="AAC72233.2"/>
    <property type="molecule type" value="mRNA"/>
</dbReference>
<dbReference type="RefSeq" id="NP_599220.1">
    <property type="nucleotide sequence ID" value="NM_134393.2"/>
</dbReference>
<dbReference type="SMR" id="Q9Z221"/>
<dbReference type="FunCoup" id="Q9Z221">
    <property type="interactions" value="5"/>
</dbReference>
<dbReference type="STRING" id="10116.ENSRNOP00000068814"/>
<dbReference type="iPTMnet" id="Q9Z221"/>
<dbReference type="PhosphoSitePlus" id="Q9Z221"/>
<dbReference type="PaxDb" id="10116-ENSRNOP00000019577"/>
<dbReference type="GeneID" id="171414"/>
<dbReference type="KEGG" id="rno:171414"/>
<dbReference type="UCSC" id="RGD:621677">
    <property type="organism name" value="rat"/>
</dbReference>
<dbReference type="AGR" id="RGD:621677"/>
<dbReference type="CTD" id="83449"/>
<dbReference type="RGD" id="621677">
    <property type="gene designation" value="Pmfbp1"/>
</dbReference>
<dbReference type="eggNOG" id="ENOG502QUDT">
    <property type="taxonomic scope" value="Eukaryota"/>
</dbReference>
<dbReference type="InParanoid" id="Q9Z221"/>
<dbReference type="PRO" id="PR:Q9Z221"/>
<dbReference type="Proteomes" id="UP000002494">
    <property type="component" value="Unplaced"/>
</dbReference>
<dbReference type="GO" id="GO:0005737">
    <property type="term" value="C:cytoplasm"/>
    <property type="evidence" value="ECO:0000266"/>
    <property type="project" value="RGD"/>
</dbReference>
<dbReference type="GO" id="GO:0001520">
    <property type="term" value="C:outer dense fiber"/>
    <property type="evidence" value="ECO:0000304"/>
    <property type="project" value="RGD"/>
</dbReference>
<dbReference type="GO" id="GO:0036126">
    <property type="term" value="C:sperm flagellum"/>
    <property type="evidence" value="ECO:0000266"/>
    <property type="project" value="RGD"/>
</dbReference>
<dbReference type="GO" id="GO:0061827">
    <property type="term" value="C:sperm head"/>
    <property type="evidence" value="ECO:0000266"/>
    <property type="project" value="RGD"/>
</dbReference>
<dbReference type="GO" id="GO:0120212">
    <property type="term" value="C:sperm head-tail coupling apparatus"/>
    <property type="evidence" value="ECO:0000250"/>
    <property type="project" value="UniProtKB"/>
</dbReference>
<dbReference type="GO" id="GO:0007010">
    <property type="term" value="P:cytoskeleton organization"/>
    <property type="evidence" value="ECO:0000303"/>
    <property type="project" value="RGD"/>
</dbReference>
<dbReference type="GO" id="GO:0010467">
    <property type="term" value="P:gene expression"/>
    <property type="evidence" value="ECO:0000266"/>
    <property type="project" value="RGD"/>
</dbReference>
<dbReference type="GO" id="GO:0008104">
    <property type="term" value="P:protein localization"/>
    <property type="evidence" value="ECO:0000266"/>
    <property type="project" value="RGD"/>
</dbReference>
<dbReference type="GO" id="GO:0065003">
    <property type="term" value="P:protein-containing complex assembly"/>
    <property type="evidence" value="ECO:0000266"/>
    <property type="project" value="RGD"/>
</dbReference>
<dbReference type="GO" id="GO:0032880">
    <property type="term" value="P:regulation of protein localization"/>
    <property type="evidence" value="ECO:0000266"/>
    <property type="project" value="RGD"/>
</dbReference>
<dbReference type="GO" id="GO:0007286">
    <property type="term" value="P:spermatid development"/>
    <property type="evidence" value="ECO:0000266"/>
    <property type="project" value="RGD"/>
</dbReference>
<dbReference type="GO" id="GO:0007283">
    <property type="term" value="P:spermatogenesis"/>
    <property type="evidence" value="ECO:0000250"/>
    <property type="project" value="UniProtKB"/>
</dbReference>
<dbReference type="InterPro" id="IPR037391">
    <property type="entry name" value="PMF1-bd"/>
</dbReference>
<dbReference type="PANTHER" id="PTHR18881:SF2">
    <property type="entry name" value="POLYAMINE-MODULATED FACTOR 1-BINDING PROTEIN 1"/>
    <property type="match status" value="1"/>
</dbReference>
<dbReference type="PANTHER" id="PTHR18881">
    <property type="entry name" value="POLYAMINE-MODULATED FACTOR 1-BINDING PROTEIN 1-RELATED"/>
    <property type="match status" value="1"/>
</dbReference>
<name>PMFBP_RAT</name>
<reference key="1">
    <citation type="journal article" date="2002" name="Mol. Reprod. Dev.">
        <title>Molecular cloning of Odf3 encoding a novel coiled-coil protein of sperm tail outer dense fibers.</title>
        <authorList>
            <person name="Petersen C."/>
            <person name="Aumuller G."/>
            <person name="Bahrami M."/>
            <person name="Hoyer-Fender S."/>
        </authorList>
    </citation>
    <scope>NUCLEOTIDE SEQUENCE [MRNA]</scope>
    <scope>FUNCTION</scope>
    <scope>TISSUE SPECIFICITY</scope>
    <source>
        <tissue>Testis</tissue>
    </source>
</reference>
<evidence type="ECO:0000250" key="1">
    <source>
        <dbReference type="UniProtKB" id="Q9WVQ0"/>
    </source>
</evidence>
<evidence type="ECO:0000255" key="2"/>
<evidence type="ECO:0000269" key="3">
    <source>
    </source>
</evidence>